<sequence>MINRITDNKFELVSKYKPSGDQPQAIEQLVDNIEGGEKAQILMGATGTGKTYTMSQVIAQVNKPTLVIAHNKTLAGQLYGEFKEFFPNNAVEYFVSYYDYYQPEAYVPSSDTYIEKDSSVNDEIDKLRHSATSALLERNDVIVVASVSCIYGLGSPKEYSDSVVSLRPGLEISRDKLLNDLVDIQFERNDIDFQRGKFRVRGDVVEIFPASRDEHAFRVEFFGDEIDRIREVEALTGRVLGEVDHLAIFPATHFVTNEDHMEVAIAKIQAELEEQLAIFEKEGKLLEAQRLKQRTEYDIEMLREMGYTNGVENYSRHMDGRSEGEPPYTLLDFFPDDFLIMIDESHMTMGQIRGMYNGDRSRKEMLVNYGFRLPSALDNRPLRREEFESHVHQIVYVSATPGDYENEQTDTVIEQIIRPTGLLDPEVEVRPTMGQIDDLLGEINARVEKNERTFITTLTKKMAEDLTDYFKEMGVKVKYMHSDIKTLERTEIIRDLRLGVFDVLVGINLLREGIDVPEVSLVAILDADKEGFLRNERGLIQTIGRAARNSEGHVIMYADTMTQSMQRAIDETARRRAIQMAYNEEHGIVPQTIKKEIRDLISVTKAALPDKEETVEIESLNKQERKDMIKKLEGQMQEAAGLLDFELAAQIRDMILEIKAMD</sequence>
<comment type="function">
    <text evidence="1">The UvrABC repair system catalyzes the recognition and processing of DNA lesions. A damage recognition complex composed of 2 UvrA and 2 UvrB subunits scans DNA for abnormalities. Upon binding of the UvrA(2)B(2) complex to a putative damaged site, the DNA wraps around one UvrB monomer. DNA wrap is dependent on ATP binding by UvrB and probably causes local melting of the DNA helix, facilitating insertion of UvrB beta-hairpin between the DNA strands. Then UvrB probes one DNA strand for the presence of a lesion. If a lesion is found the UvrA subunits dissociate and the UvrB-DNA preincision complex is formed. This complex is subsequently bound by UvrC and the second UvrB is released. If no lesion is found, the DNA wraps around the other UvrB subunit that will check the other stand for damage.</text>
</comment>
<comment type="subunit">
    <text evidence="1">Forms a heterotetramer with UvrA during the search for lesions. Interacts with UvrC in an incision complex.</text>
</comment>
<comment type="subcellular location">
    <subcellularLocation>
        <location evidence="1">Cytoplasm</location>
    </subcellularLocation>
</comment>
<comment type="domain">
    <text evidence="1">The beta-hairpin motif is involved in DNA binding.</text>
</comment>
<comment type="similarity">
    <text evidence="1">Belongs to the UvrB family.</text>
</comment>
<organism>
    <name type="scientific">Streptococcus sanguinis (strain SK36)</name>
    <dbReference type="NCBI Taxonomy" id="388919"/>
    <lineage>
        <taxon>Bacteria</taxon>
        <taxon>Bacillati</taxon>
        <taxon>Bacillota</taxon>
        <taxon>Bacilli</taxon>
        <taxon>Lactobacillales</taxon>
        <taxon>Streptococcaceae</taxon>
        <taxon>Streptococcus</taxon>
    </lineage>
</organism>
<dbReference type="EMBL" id="CP000387">
    <property type="protein sequence ID" value="ABN44754.1"/>
    <property type="molecule type" value="Genomic_DNA"/>
</dbReference>
<dbReference type="RefSeq" id="WP_011837078.1">
    <property type="nucleotide sequence ID" value="NC_009009.1"/>
</dbReference>
<dbReference type="RefSeq" id="YP_001035304.1">
    <property type="nucleotide sequence ID" value="NC_009009.1"/>
</dbReference>
<dbReference type="SMR" id="A3CNJ9"/>
<dbReference type="STRING" id="388919.SSA_1356"/>
<dbReference type="KEGG" id="ssa:SSA_1356"/>
<dbReference type="PATRIC" id="fig|388919.9.peg.1289"/>
<dbReference type="eggNOG" id="COG0556">
    <property type="taxonomic scope" value="Bacteria"/>
</dbReference>
<dbReference type="HOGENOM" id="CLU_009621_2_1_9"/>
<dbReference type="OrthoDB" id="9806651at2"/>
<dbReference type="Proteomes" id="UP000002148">
    <property type="component" value="Chromosome"/>
</dbReference>
<dbReference type="GO" id="GO:0005737">
    <property type="term" value="C:cytoplasm"/>
    <property type="evidence" value="ECO:0007669"/>
    <property type="project" value="UniProtKB-SubCell"/>
</dbReference>
<dbReference type="GO" id="GO:0009380">
    <property type="term" value="C:excinuclease repair complex"/>
    <property type="evidence" value="ECO:0007669"/>
    <property type="project" value="InterPro"/>
</dbReference>
<dbReference type="GO" id="GO:0005524">
    <property type="term" value="F:ATP binding"/>
    <property type="evidence" value="ECO:0007669"/>
    <property type="project" value="UniProtKB-UniRule"/>
</dbReference>
<dbReference type="GO" id="GO:0016887">
    <property type="term" value="F:ATP hydrolysis activity"/>
    <property type="evidence" value="ECO:0007669"/>
    <property type="project" value="InterPro"/>
</dbReference>
<dbReference type="GO" id="GO:0003677">
    <property type="term" value="F:DNA binding"/>
    <property type="evidence" value="ECO:0007669"/>
    <property type="project" value="UniProtKB-UniRule"/>
</dbReference>
<dbReference type="GO" id="GO:0009381">
    <property type="term" value="F:excinuclease ABC activity"/>
    <property type="evidence" value="ECO:0007669"/>
    <property type="project" value="UniProtKB-UniRule"/>
</dbReference>
<dbReference type="GO" id="GO:0004386">
    <property type="term" value="F:helicase activity"/>
    <property type="evidence" value="ECO:0007669"/>
    <property type="project" value="UniProtKB-KW"/>
</dbReference>
<dbReference type="GO" id="GO:0006289">
    <property type="term" value="P:nucleotide-excision repair"/>
    <property type="evidence" value="ECO:0007669"/>
    <property type="project" value="UniProtKB-UniRule"/>
</dbReference>
<dbReference type="GO" id="GO:0009432">
    <property type="term" value="P:SOS response"/>
    <property type="evidence" value="ECO:0007669"/>
    <property type="project" value="UniProtKB-UniRule"/>
</dbReference>
<dbReference type="CDD" id="cd17916">
    <property type="entry name" value="DEXHc_UvrB"/>
    <property type="match status" value="1"/>
</dbReference>
<dbReference type="CDD" id="cd18790">
    <property type="entry name" value="SF2_C_UvrB"/>
    <property type="match status" value="1"/>
</dbReference>
<dbReference type="Gene3D" id="3.40.50.300">
    <property type="entry name" value="P-loop containing nucleotide triphosphate hydrolases"/>
    <property type="match status" value="3"/>
</dbReference>
<dbReference type="Gene3D" id="4.10.860.10">
    <property type="entry name" value="UVR domain"/>
    <property type="match status" value="1"/>
</dbReference>
<dbReference type="HAMAP" id="MF_00204">
    <property type="entry name" value="UvrB"/>
    <property type="match status" value="1"/>
</dbReference>
<dbReference type="InterPro" id="IPR006935">
    <property type="entry name" value="Helicase/UvrB_N"/>
</dbReference>
<dbReference type="InterPro" id="IPR014001">
    <property type="entry name" value="Helicase_ATP-bd"/>
</dbReference>
<dbReference type="InterPro" id="IPR001650">
    <property type="entry name" value="Helicase_C-like"/>
</dbReference>
<dbReference type="InterPro" id="IPR027417">
    <property type="entry name" value="P-loop_NTPase"/>
</dbReference>
<dbReference type="InterPro" id="IPR001943">
    <property type="entry name" value="UVR_dom"/>
</dbReference>
<dbReference type="InterPro" id="IPR036876">
    <property type="entry name" value="UVR_dom_sf"/>
</dbReference>
<dbReference type="InterPro" id="IPR004807">
    <property type="entry name" value="UvrB"/>
</dbReference>
<dbReference type="InterPro" id="IPR041471">
    <property type="entry name" value="UvrB_inter"/>
</dbReference>
<dbReference type="InterPro" id="IPR024759">
    <property type="entry name" value="UvrB_YAD/RRR_dom"/>
</dbReference>
<dbReference type="NCBIfam" id="NF003673">
    <property type="entry name" value="PRK05298.1"/>
    <property type="match status" value="1"/>
</dbReference>
<dbReference type="NCBIfam" id="TIGR00631">
    <property type="entry name" value="uvrb"/>
    <property type="match status" value="1"/>
</dbReference>
<dbReference type="PANTHER" id="PTHR24029">
    <property type="entry name" value="UVRABC SYSTEM PROTEIN B"/>
    <property type="match status" value="1"/>
</dbReference>
<dbReference type="PANTHER" id="PTHR24029:SF0">
    <property type="entry name" value="UVRABC SYSTEM PROTEIN B"/>
    <property type="match status" value="1"/>
</dbReference>
<dbReference type="Pfam" id="PF00271">
    <property type="entry name" value="Helicase_C"/>
    <property type="match status" value="1"/>
</dbReference>
<dbReference type="Pfam" id="PF04851">
    <property type="entry name" value="ResIII"/>
    <property type="match status" value="1"/>
</dbReference>
<dbReference type="Pfam" id="PF02151">
    <property type="entry name" value="UVR"/>
    <property type="match status" value="1"/>
</dbReference>
<dbReference type="Pfam" id="PF12344">
    <property type="entry name" value="UvrB"/>
    <property type="match status" value="1"/>
</dbReference>
<dbReference type="Pfam" id="PF17757">
    <property type="entry name" value="UvrB_inter"/>
    <property type="match status" value="1"/>
</dbReference>
<dbReference type="SMART" id="SM00487">
    <property type="entry name" value="DEXDc"/>
    <property type="match status" value="1"/>
</dbReference>
<dbReference type="SMART" id="SM00490">
    <property type="entry name" value="HELICc"/>
    <property type="match status" value="1"/>
</dbReference>
<dbReference type="SUPFAM" id="SSF46600">
    <property type="entry name" value="C-terminal UvrC-binding domain of UvrB"/>
    <property type="match status" value="1"/>
</dbReference>
<dbReference type="SUPFAM" id="SSF52540">
    <property type="entry name" value="P-loop containing nucleoside triphosphate hydrolases"/>
    <property type="match status" value="2"/>
</dbReference>
<dbReference type="PROSITE" id="PS51192">
    <property type="entry name" value="HELICASE_ATP_BIND_1"/>
    <property type="match status" value="1"/>
</dbReference>
<dbReference type="PROSITE" id="PS51194">
    <property type="entry name" value="HELICASE_CTER"/>
    <property type="match status" value="1"/>
</dbReference>
<dbReference type="PROSITE" id="PS50151">
    <property type="entry name" value="UVR"/>
    <property type="match status" value="1"/>
</dbReference>
<proteinExistence type="inferred from homology"/>
<keyword id="KW-0067">ATP-binding</keyword>
<keyword id="KW-0963">Cytoplasm</keyword>
<keyword id="KW-0227">DNA damage</keyword>
<keyword id="KW-0228">DNA excision</keyword>
<keyword id="KW-0234">DNA repair</keyword>
<keyword id="KW-0267">Excision nuclease</keyword>
<keyword id="KW-0347">Helicase</keyword>
<keyword id="KW-0378">Hydrolase</keyword>
<keyword id="KW-0547">Nucleotide-binding</keyword>
<keyword id="KW-1185">Reference proteome</keyword>
<keyword id="KW-0742">SOS response</keyword>
<protein>
    <recommendedName>
        <fullName evidence="1">UvrABC system protein B</fullName>
        <shortName evidence="1">Protein UvrB</shortName>
    </recommendedName>
    <alternativeName>
        <fullName evidence="1">Excinuclease ABC subunit B</fullName>
    </alternativeName>
</protein>
<feature type="chain" id="PRO_1000077932" description="UvrABC system protein B">
    <location>
        <begin position="1"/>
        <end position="662"/>
    </location>
</feature>
<feature type="domain" description="Helicase ATP-binding" evidence="1">
    <location>
        <begin position="31"/>
        <end position="188"/>
    </location>
</feature>
<feature type="domain" description="Helicase C-terminal" evidence="1">
    <location>
        <begin position="435"/>
        <end position="601"/>
    </location>
</feature>
<feature type="domain" description="UVR" evidence="1">
    <location>
        <begin position="626"/>
        <end position="661"/>
    </location>
</feature>
<feature type="short sequence motif" description="Beta-hairpin">
    <location>
        <begin position="97"/>
        <end position="120"/>
    </location>
</feature>
<feature type="binding site" evidence="1">
    <location>
        <begin position="44"/>
        <end position="51"/>
    </location>
    <ligand>
        <name>ATP</name>
        <dbReference type="ChEBI" id="CHEBI:30616"/>
    </ligand>
</feature>
<reference key="1">
    <citation type="journal article" date="2007" name="J. Bacteriol.">
        <title>Genome of the opportunistic pathogen Streptococcus sanguinis.</title>
        <authorList>
            <person name="Xu P."/>
            <person name="Alves J.M."/>
            <person name="Kitten T."/>
            <person name="Brown A."/>
            <person name="Chen Z."/>
            <person name="Ozaki L.S."/>
            <person name="Manque P."/>
            <person name="Ge X."/>
            <person name="Serrano M.G."/>
            <person name="Puiu D."/>
            <person name="Hendricks S."/>
            <person name="Wang Y."/>
            <person name="Chaplin M.D."/>
            <person name="Akan D."/>
            <person name="Paik S."/>
            <person name="Peterson D.L."/>
            <person name="Macrina F.L."/>
            <person name="Buck G.A."/>
        </authorList>
    </citation>
    <scope>NUCLEOTIDE SEQUENCE [LARGE SCALE GENOMIC DNA]</scope>
    <source>
        <strain>SK36</strain>
    </source>
</reference>
<accession>A3CNJ9</accession>
<gene>
    <name evidence="1" type="primary">uvrB</name>
    <name type="ordered locus">SSA_1356</name>
</gene>
<name>UVRB_STRSV</name>
<evidence type="ECO:0000255" key="1">
    <source>
        <dbReference type="HAMAP-Rule" id="MF_00204"/>
    </source>
</evidence>